<comment type="catalytic activity">
    <reaction evidence="1">
        <text>tRNA(Phe) + L-phenylalanine + ATP = L-phenylalanyl-tRNA(Phe) + AMP + diphosphate + H(+)</text>
        <dbReference type="Rhea" id="RHEA:19413"/>
        <dbReference type="Rhea" id="RHEA-COMP:9668"/>
        <dbReference type="Rhea" id="RHEA-COMP:9699"/>
        <dbReference type="ChEBI" id="CHEBI:15378"/>
        <dbReference type="ChEBI" id="CHEBI:30616"/>
        <dbReference type="ChEBI" id="CHEBI:33019"/>
        <dbReference type="ChEBI" id="CHEBI:58095"/>
        <dbReference type="ChEBI" id="CHEBI:78442"/>
        <dbReference type="ChEBI" id="CHEBI:78531"/>
        <dbReference type="ChEBI" id="CHEBI:456215"/>
        <dbReference type="EC" id="6.1.1.20"/>
    </reaction>
</comment>
<comment type="cofactor">
    <cofactor evidence="1">
        <name>Mg(2+)</name>
        <dbReference type="ChEBI" id="CHEBI:18420"/>
    </cofactor>
    <text evidence="1">Binds 2 magnesium ions per tetramer.</text>
</comment>
<comment type="subunit">
    <text evidence="1">Tetramer of two alpha and two beta subunits.</text>
</comment>
<comment type="subcellular location">
    <subcellularLocation>
        <location evidence="1">Cytoplasm</location>
    </subcellularLocation>
</comment>
<comment type="similarity">
    <text evidence="1">Belongs to the class-II aminoacyl-tRNA synthetase family. Phe-tRNA synthetase alpha subunit type 1 subfamily.</text>
</comment>
<gene>
    <name evidence="1" type="primary">pheS</name>
    <name type="ordered locus">ECP_1662</name>
</gene>
<reference key="1">
    <citation type="journal article" date="2006" name="Mol. Microbiol.">
        <title>Role of pathogenicity island-associated integrases in the genome plasticity of uropathogenic Escherichia coli strain 536.</title>
        <authorList>
            <person name="Hochhut B."/>
            <person name="Wilde C."/>
            <person name="Balling G."/>
            <person name="Middendorf B."/>
            <person name="Dobrindt U."/>
            <person name="Brzuszkiewicz E."/>
            <person name="Gottschalk G."/>
            <person name="Carniel E."/>
            <person name="Hacker J."/>
        </authorList>
    </citation>
    <scope>NUCLEOTIDE SEQUENCE [LARGE SCALE GENOMIC DNA]</scope>
    <source>
        <strain>536 / UPEC</strain>
    </source>
</reference>
<proteinExistence type="inferred from homology"/>
<organism>
    <name type="scientific">Escherichia coli O6:K15:H31 (strain 536 / UPEC)</name>
    <dbReference type="NCBI Taxonomy" id="362663"/>
    <lineage>
        <taxon>Bacteria</taxon>
        <taxon>Pseudomonadati</taxon>
        <taxon>Pseudomonadota</taxon>
        <taxon>Gammaproteobacteria</taxon>
        <taxon>Enterobacterales</taxon>
        <taxon>Enterobacteriaceae</taxon>
        <taxon>Escherichia</taxon>
    </lineage>
</organism>
<name>SYFA_ECOL5</name>
<feature type="chain" id="PRO_1000006825" description="Phenylalanine--tRNA ligase alpha subunit">
    <location>
        <begin position="1"/>
        <end position="327"/>
    </location>
</feature>
<feature type="binding site" evidence="1">
    <location>
        <position position="252"/>
    </location>
    <ligand>
        <name>Mg(2+)</name>
        <dbReference type="ChEBI" id="CHEBI:18420"/>
        <note>shared with beta subunit</note>
    </ligand>
</feature>
<accession>Q0THB4</accession>
<protein>
    <recommendedName>
        <fullName evidence="1">Phenylalanine--tRNA ligase alpha subunit</fullName>
        <ecNumber evidence="1">6.1.1.20</ecNumber>
    </recommendedName>
    <alternativeName>
        <fullName evidence="1">Phenylalanyl-tRNA synthetase alpha subunit</fullName>
        <shortName evidence="1">PheRS</shortName>
    </alternativeName>
</protein>
<dbReference type="EC" id="6.1.1.20" evidence="1"/>
<dbReference type="EMBL" id="CP000247">
    <property type="protein sequence ID" value="ABG69665.1"/>
    <property type="molecule type" value="Genomic_DNA"/>
</dbReference>
<dbReference type="RefSeq" id="WP_000018588.1">
    <property type="nucleotide sequence ID" value="NC_008253.1"/>
</dbReference>
<dbReference type="SMR" id="Q0THB4"/>
<dbReference type="GeneID" id="86946239"/>
<dbReference type="KEGG" id="ecp:ECP_1662"/>
<dbReference type="HOGENOM" id="CLU_025086_0_1_6"/>
<dbReference type="Proteomes" id="UP000009182">
    <property type="component" value="Chromosome"/>
</dbReference>
<dbReference type="GO" id="GO:0005737">
    <property type="term" value="C:cytoplasm"/>
    <property type="evidence" value="ECO:0007669"/>
    <property type="project" value="UniProtKB-SubCell"/>
</dbReference>
<dbReference type="GO" id="GO:0005524">
    <property type="term" value="F:ATP binding"/>
    <property type="evidence" value="ECO:0007669"/>
    <property type="project" value="UniProtKB-UniRule"/>
</dbReference>
<dbReference type="GO" id="GO:0000287">
    <property type="term" value="F:magnesium ion binding"/>
    <property type="evidence" value="ECO:0007669"/>
    <property type="project" value="UniProtKB-UniRule"/>
</dbReference>
<dbReference type="GO" id="GO:0004826">
    <property type="term" value="F:phenylalanine-tRNA ligase activity"/>
    <property type="evidence" value="ECO:0007669"/>
    <property type="project" value="UniProtKB-UniRule"/>
</dbReference>
<dbReference type="GO" id="GO:0000049">
    <property type="term" value="F:tRNA binding"/>
    <property type="evidence" value="ECO:0007669"/>
    <property type="project" value="InterPro"/>
</dbReference>
<dbReference type="GO" id="GO:0006432">
    <property type="term" value="P:phenylalanyl-tRNA aminoacylation"/>
    <property type="evidence" value="ECO:0007669"/>
    <property type="project" value="UniProtKB-UniRule"/>
</dbReference>
<dbReference type="CDD" id="cd00496">
    <property type="entry name" value="PheRS_alpha_core"/>
    <property type="match status" value="1"/>
</dbReference>
<dbReference type="FunFam" id="3.30.930.10:FF:000003">
    <property type="entry name" value="Phenylalanine--tRNA ligase alpha subunit"/>
    <property type="match status" value="1"/>
</dbReference>
<dbReference type="Gene3D" id="3.30.930.10">
    <property type="entry name" value="Bira Bifunctional Protein, Domain 2"/>
    <property type="match status" value="1"/>
</dbReference>
<dbReference type="HAMAP" id="MF_00281">
    <property type="entry name" value="Phe_tRNA_synth_alpha1"/>
    <property type="match status" value="1"/>
</dbReference>
<dbReference type="InterPro" id="IPR006195">
    <property type="entry name" value="aa-tRNA-synth_II"/>
</dbReference>
<dbReference type="InterPro" id="IPR045864">
    <property type="entry name" value="aa-tRNA-synth_II/BPL/LPL"/>
</dbReference>
<dbReference type="InterPro" id="IPR004529">
    <property type="entry name" value="Phe-tRNA-synth_IIc_asu"/>
</dbReference>
<dbReference type="InterPro" id="IPR004188">
    <property type="entry name" value="Phe-tRNA_ligase_II_N"/>
</dbReference>
<dbReference type="InterPro" id="IPR022911">
    <property type="entry name" value="Phe_tRNA_ligase_alpha1_bac"/>
</dbReference>
<dbReference type="InterPro" id="IPR002319">
    <property type="entry name" value="Phenylalanyl-tRNA_Synthase"/>
</dbReference>
<dbReference type="InterPro" id="IPR010978">
    <property type="entry name" value="tRNA-bd_arm"/>
</dbReference>
<dbReference type="NCBIfam" id="TIGR00468">
    <property type="entry name" value="pheS"/>
    <property type="match status" value="1"/>
</dbReference>
<dbReference type="PANTHER" id="PTHR11538:SF41">
    <property type="entry name" value="PHENYLALANINE--TRNA LIGASE, MITOCHONDRIAL"/>
    <property type="match status" value="1"/>
</dbReference>
<dbReference type="PANTHER" id="PTHR11538">
    <property type="entry name" value="PHENYLALANYL-TRNA SYNTHETASE"/>
    <property type="match status" value="1"/>
</dbReference>
<dbReference type="Pfam" id="PF02912">
    <property type="entry name" value="Phe_tRNA-synt_N"/>
    <property type="match status" value="1"/>
</dbReference>
<dbReference type="Pfam" id="PF01409">
    <property type="entry name" value="tRNA-synt_2d"/>
    <property type="match status" value="1"/>
</dbReference>
<dbReference type="SUPFAM" id="SSF55681">
    <property type="entry name" value="Class II aaRS and biotin synthetases"/>
    <property type="match status" value="1"/>
</dbReference>
<dbReference type="SUPFAM" id="SSF46589">
    <property type="entry name" value="tRNA-binding arm"/>
    <property type="match status" value="1"/>
</dbReference>
<dbReference type="PROSITE" id="PS50862">
    <property type="entry name" value="AA_TRNA_LIGASE_II"/>
    <property type="match status" value="1"/>
</dbReference>
<sequence length="327" mass="36802">MSHLAELVASAKAAISQASDVAALDNVRVEYLGKKGHLTLQMTTLRELPPEERPAAGAVINEAKEQVQQALNARKAELESAALNARLAAETIDVSLPGRRIENGGLHPVTRTIDRIESFFGELGFTVATGPEIEDDYHNFDALNIPGHHPARADHDTFWFDATRLLRTQTSGVQIRTMKAQQPPIRIIAPGRVYRNDYDQTHTPMFHQMEGLIVDTNISFTNLKGTLHDFLRNFFEEDLQIRFRPSYFPFTEPSAEVDVMGKNGKWLEVLGCGMVHPNVLRNVGIDPEVYSGFAFGMGMERLTMLRYGVTDLRSFFENDLRFLKQFK</sequence>
<evidence type="ECO:0000255" key="1">
    <source>
        <dbReference type="HAMAP-Rule" id="MF_00281"/>
    </source>
</evidence>
<keyword id="KW-0030">Aminoacyl-tRNA synthetase</keyword>
<keyword id="KW-0067">ATP-binding</keyword>
<keyword id="KW-0963">Cytoplasm</keyword>
<keyword id="KW-0436">Ligase</keyword>
<keyword id="KW-0460">Magnesium</keyword>
<keyword id="KW-0479">Metal-binding</keyword>
<keyword id="KW-0547">Nucleotide-binding</keyword>
<keyword id="KW-0648">Protein biosynthesis</keyword>